<name>LPXH_PSEP1</name>
<keyword id="KW-0997">Cell inner membrane</keyword>
<keyword id="KW-1003">Cell membrane</keyword>
<keyword id="KW-0378">Hydrolase</keyword>
<keyword id="KW-0441">Lipid A biosynthesis</keyword>
<keyword id="KW-0444">Lipid biosynthesis</keyword>
<keyword id="KW-0443">Lipid metabolism</keyword>
<keyword id="KW-0464">Manganese</keyword>
<keyword id="KW-0472">Membrane</keyword>
<keyword id="KW-0479">Metal-binding</keyword>
<dbReference type="EC" id="3.6.1.54" evidence="1"/>
<dbReference type="EMBL" id="CP000712">
    <property type="protein sequence ID" value="ABQ78921.1"/>
    <property type="molecule type" value="Genomic_DNA"/>
</dbReference>
<dbReference type="SMR" id="A5W461"/>
<dbReference type="KEGG" id="ppf:Pput_2789"/>
<dbReference type="eggNOG" id="COG2908">
    <property type="taxonomic scope" value="Bacteria"/>
</dbReference>
<dbReference type="HOGENOM" id="CLU_074586_0_0_6"/>
<dbReference type="UniPathway" id="UPA00359">
    <property type="reaction ID" value="UER00480"/>
</dbReference>
<dbReference type="GO" id="GO:0005737">
    <property type="term" value="C:cytoplasm"/>
    <property type="evidence" value="ECO:0007669"/>
    <property type="project" value="InterPro"/>
</dbReference>
<dbReference type="GO" id="GO:0019897">
    <property type="term" value="C:extrinsic component of plasma membrane"/>
    <property type="evidence" value="ECO:0007669"/>
    <property type="project" value="UniProtKB-UniRule"/>
</dbReference>
<dbReference type="GO" id="GO:0030145">
    <property type="term" value="F:manganese ion binding"/>
    <property type="evidence" value="ECO:0007669"/>
    <property type="project" value="UniProtKB-UniRule"/>
</dbReference>
<dbReference type="GO" id="GO:0008758">
    <property type="term" value="F:UDP-2,3-diacylglucosamine hydrolase activity"/>
    <property type="evidence" value="ECO:0007669"/>
    <property type="project" value="UniProtKB-UniRule"/>
</dbReference>
<dbReference type="GO" id="GO:0009245">
    <property type="term" value="P:lipid A biosynthetic process"/>
    <property type="evidence" value="ECO:0007669"/>
    <property type="project" value="UniProtKB-UniRule"/>
</dbReference>
<dbReference type="CDD" id="cd07398">
    <property type="entry name" value="MPP_YbbF-LpxH"/>
    <property type="match status" value="1"/>
</dbReference>
<dbReference type="Gene3D" id="3.60.21.10">
    <property type="match status" value="1"/>
</dbReference>
<dbReference type="HAMAP" id="MF_00575">
    <property type="entry name" value="LpxH"/>
    <property type="match status" value="1"/>
</dbReference>
<dbReference type="InterPro" id="IPR004843">
    <property type="entry name" value="Calcineurin-like_PHP_ApaH"/>
</dbReference>
<dbReference type="InterPro" id="IPR043461">
    <property type="entry name" value="LpxH-like"/>
</dbReference>
<dbReference type="InterPro" id="IPR029052">
    <property type="entry name" value="Metallo-depent_PP-like"/>
</dbReference>
<dbReference type="InterPro" id="IPR010138">
    <property type="entry name" value="UDP-diacylglucosamine_Hdrlase"/>
</dbReference>
<dbReference type="NCBIfam" id="TIGR01854">
    <property type="entry name" value="lipid_A_lpxH"/>
    <property type="match status" value="1"/>
</dbReference>
<dbReference type="NCBIfam" id="NF003743">
    <property type="entry name" value="PRK05340.1"/>
    <property type="match status" value="1"/>
</dbReference>
<dbReference type="PANTHER" id="PTHR34990:SF1">
    <property type="entry name" value="UDP-2,3-DIACYLGLUCOSAMINE HYDROLASE"/>
    <property type="match status" value="1"/>
</dbReference>
<dbReference type="PANTHER" id="PTHR34990">
    <property type="entry name" value="UDP-2,3-DIACYLGLUCOSAMINE HYDROLASE-RELATED"/>
    <property type="match status" value="1"/>
</dbReference>
<dbReference type="Pfam" id="PF00149">
    <property type="entry name" value="Metallophos"/>
    <property type="match status" value="1"/>
</dbReference>
<dbReference type="SUPFAM" id="SSF56300">
    <property type="entry name" value="Metallo-dependent phosphatases"/>
    <property type="match status" value="1"/>
</dbReference>
<proteinExistence type="inferred from homology"/>
<organism>
    <name type="scientific">Pseudomonas putida (strain ATCC 700007 / DSM 6899 / JCM 31910 / BCRC 17059 / LMG 24140 / F1)</name>
    <dbReference type="NCBI Taxonomy" id="351746"/>
    <lineage>
        <taxon>Bacteria</taxon>
        <taxon>Pseudomonadati</taxon>
        <taxon>Pseudomonadota</taxon>
        <taxon>Gammaproteobacteria</taxon>
        <taxon>Pseudomonadales</taxon>
        <taxon>Pseudomonadaceae</taxon>
        <taxon>Pseudomonas</taxon>
    </lineage>
</organism>
<accession>A5W461</accession>
<protein>
    <recommendedName>
        <fullName evidence="1">UDP-2,3-diacylglucosamine hydrolase</fullName>
        <ecNumber evidence="1">3.6.1.54</ecNumber>
    </recommendedName>
    <alternativeName>
        <fullName evidence="1">UDP-2,3-diacylglucosamine diphosphatase</fullName>
    </alternativeName>
</protein>
<sequence>MILLISDLHLQEERPDISRAFLDLLDGRARHAKALYILGDFFEAWIGDDAMTPFQQSICQAMRRLSDSGTAIYLMHGNRDFLIGQAFCDAAGCTLLSDPSVIELGGEQVLLMHGDTLCTRDLGYMKMRRLLRNPLSLWILRHLPLSARYKLARKLRSESRTQVRMKSTEIVDVTPEEVPKVMAAHGVRTLVHGHTHRPAIHKLVVDGQPARRIVLGDWDRRGWALQVDEQGFQLAPFEFS</sequence>
<comment type="function">
    <text evidence="1">Hydrolyzes the pyrophosphate bond of UDP-2,3-diacylglucosamine to yield 2,3-diacylglucosamine 1-phosphate (lipid X) and UMP by catalyzing the attack of water at the alpha-P atom. Involved in the biosynthesis of lipid A, a phosphorylated glycolipid that anchors the lipopolysaccharide to the outer membrane of the cell.</text>
</comment>
<comment type="catalytic activity">
    <reaction evidence="1">
        <text>UDP-2-N,3-O-bis[(3R)-3-hydroxytetradecanoyl]-alpha-D-glucosamine + H2O = 2-N,3-O-bis[(3R)-3-hydroxytetradecanoyl]-alpha-D-glucosaminyl 1-phosphate + UMP + 2 H(+)</text>
        <dbReference type="Rhea" id="RHEA:25213"/>
        <dbReference type="ChEBI" id="CHEBI:15377"/>
        <dbReference type="ChEBI" id="CHEBI:15378"/>
        <dbReference type="ChEBI" id="CHEBI:57865"/>
        <dbReference type="ChEBI" id="CHEBI:57957"/>
        <dbReference type="ChEBI" id="CHEBI:78847"/>
        <dbReference type="EC" id="3.6.1.54"/>
    </reaction>
</comment>
<comment type="cofactor">
    <cofactor evidence="1">
        <name>Mn(2+)</name>
        <dbReference type="ChEBI" id="CHEBI:29035"/>
    </cofactor>
    <text evidence="1">Binds 2 Mn(2+) ions per subunit in a binuclear metal center.</text>
</comment>
<comment type="pathway">
    <text evidence="1">Glycolipid biosynthesis; lipid IV(A) biosynthesis; lipid IV(A) from (3R)-3-hydroxytetradecanoyl-[acyl-carrier-protein] and UDP-N-acetyl-alpha-D-glucosamine: step 4/6.</text>
</comment>
<comment type="subcellular location">
    <subcellularLocation>
        <location evidence="1">Cell inner membrane</location>
        <topology evidence="1">Peripheral membrane protein</topology>
        <orientation evidence="1">Cytoplasmic side</orientation>
    </subcellularLocation>
</comment>
<comment type="similarity">
    <text evidence="1">Belongs to the LpxH family.</text>
</comment>
<reference key="1">
    <citation type="submission" date="2007-05" db="EMBL/GenBank/DDBJ databases">
        <title>Complete sequence of Pseudomonas putida F1.</title>
        <authorList>
            <consortium name="US DOE Joint Genome Institute"/>
            <person name="Copeland A."/>
            <person name="Lucas S."/>
            <person name="Lapidus A."/>
            <person name="Barry K."/>
            <person name="Detter J.C."/>
            <person name="Glavina del Rio T."/>
            <person name="Hammon N."/>
            <person name="Israni S."/>
            <person name="Dalin E."/>
            <person name="Tice H."/>
            <person name="Pitluck S."/>
            <person name="Chain P."/>
            <person name="Malfatti S."/>
            <person name="Shin M."/>
            <person name="Vergez L."/>
            <person name="Schmutz J."/>
            <person name="Larimer F."/>
            <person name="Land M."/>
            <person name="Hauser L."/>
            <person name="Kyrpides N."/>
            <person name="Lykidis A."/>
            <person name="Parales R."/>
            <person name="Richardson P."/>
        </authorList>
    </citation>
    <scope>NUCLEOTIDE SEQUENCE [LARGE SCALE GENOMIC DNA]</scope>
    <source>
        <strain>ATCC 700007 / DSM 6899 / JCM 31910 / BCRC 17059 / LMG 24140 / F1</strain>
    </source>
</reference>
<gene>
    <name evidence="1" type="primary">lpxH</name>
    <name type="ordered locus">Pput_2789</name>
</gene>
<evidence type="ECO:0000255" key="1">
    <source>
        <dbReference type="HAMAP-Rule" id="MF_00575"/>
    </source>
</evidence>
<feature type="chain" id="PRO_1000025073" description="UDP-2,3-diacylglucosamine hydrolase">
    <location>
        <begin position="1"/>
        <end position="240"/>
    </location>
</feature>
<feature type="binding site" evidence="1">
    <location>
        <position position="7"/>
    </location>
    <ligand>
        <name>Mn(2+)</name>
        <dbReference type="ChEBI" id="CHEBI:29035"/>
        <label>1</label>
    </ligand>
</feature>
<feature type="binding site" evidence="1">
    <location>
        <position position="9"/>
    </location>
    <ligand>
        <name>Mn(2+)</name>
        <dbReference type="ChEBI" id="CHEBI:29035"/>
        <label>1</label>
    </ligand>
</feature>
<feature type="binding site" evidence="1">
    <location>
        <position position="40"/>
    </location>
    <ligand>
        <name>Mn(2+)</name>
        <dbReference type="ChEBI" id="CHEBI:29035"/>
        <label>1</label>
    </ligand>
</feature>
<feature type="binding site" evidence="1">
    <location>
        <position position="40"/>
    </location>
    <ligand>
        <name>Mn(2+)</name>
        <dbReference type="ChEBI" id="CHEBI:29035"/>
        <label>2</label>
    </ligand>
</feature>
<feature type="binding site" evidence="1">
    <location>
        <begin position="78"/>
        <end position="79"/>
    </location>
    <ligand>
        <name>substrate</name>
    </ligand>
</feature>
<feature type="binding site" evidence="1">
    <location>
        <position position="78"/>
    </location>
    <ligand>
        <name>Mn(2+)</name>
        <dbReference type="ChEBI" id="CHEBI:29035"/>
        <label>2</label>
    </ligand>
</feature>
<feature type="binding site" evidence="1">
    <location>
        <position position="113"/>
    </location>
    <ligand>
        <name>Mn(2+)</name>
        <dbReference type="ChEBI" id="CHEBI:29035"/>
        <label>2</label>
    </ligand>
</feature>
<feature type="binding site" evidence="1">
    <location>
        <position position="121"/>
    </location>
    <ligand>
        <name>substrate</name>
    </ligand>
</feature>
<feature type="binding site" evidence="1">
    <location>
        <position position="159"/>
    </location>
    <ligand>
        <name>substrate</name>
    </ligand>
</feature>
<feature type="binding site" evidence="1">
    <location>
        <position position="166"/>
    </location>
    <ligand>
        <name>substrate</name>
    </ligand>
</feature>
<feature type="binding site" evidence="1">
    <location>
        <position position="194"/>
    </location>
    <ligand>
        <name>Mn(2+)</name>
        <dbReference type="ChEBI" id="CHEBI:29035"/>
        <label>2</label>
    </ligand>
</feature>
<feature type="binding site" evidence="1">
    <location>
        <position position="194"/>
    </location>
    <ligand>
        <name>substrate</name>
    </ligand>
</feature>
<feature type="binding site" evidence="1">
    <location>
        <position position="196"/>
    </location>
    <ligand>
        <name>Mn(2+)</name>
        <dbReference type="ChEBI" id="CHEBI:29035"/>
        <label>1</label>
    </ligand>
</feature>